<protein>
    <recommendedName>
        <fullName evidence="1">N-succinylglutamate 5-semialdehyde dehydrogenase</fullName>
        <ecNumber evidence="1">1.2.1.71</ecNumber>
    </recommendedName>
    <alternativeName>
        <fullName evidence="1">Succinylglutamic semialdehyde dehydrogenase</fullName>
        <shortName evidence="1">SGSD</shortName>
    </alternativeName>
</protein>
<gene>
    <name evidence="1" type="primary">astD</name>
    <name type="ordered locus">c2146</name>
</gene>
<reference key="1">
    <citation type="journal article" date="2002" name="Proc. Natl. Acad. Sci. U.S.A.">
        <title>Extensive mosaic structure revealed by the complete genome sequence of uropathogenic Escherichia coli.</title>
        <authorList>
            <person name="Welch R.A."/>
            <person name="Burland V."/>
            <person name="Plunkett G. III"/>
            <person name="Redford P."/>
            <person name="Roesch P."/>
            <person name="Rasko D."/>
            <person name="Buckles E.L."/>
            <person name="Liou S.-R."/>
            <person name="Boutin A."/>
            <person name="Hackett J."/>
            <person name="Stroud D."/>
            <person name="Mayhew G.F."/>
            <person name="Rose D.J."/>
            <person name="Zhou S."/>
            <person name="Schwartz D.C."/>
            <person name="Perna N.T."/>
            <person name="Mobley H.L.T."/>
            <person name="Donnenberg M.S."/>
            <person name="Blattner F.R."/>
        </authorList>
    </citation>
    <scope>NUCLEOTIDE SEQUENCE [LARGE SCALE GENOMIC DNA]</scope>
    <source>
        <strain>CFT073 / ATCC 700928 / UPEC</strain>
    </source>
</reference>
<proteinExistence type="inferred from homology"/>
<accession>Q8FH01</accession>
<keyword id="KW-0056">Arginine metabolism</keyword>
<keyword id="KW-0520">NAD</keyword>
<keyword id="KW-0560">Oxidoreductase</keyword>
<keyword id="KW-1185">Reference proteome</keyword>
<evidence type="ECO:0000255" key="1">
    <source>
        <dbReference type="HAMAP-Rule" id="MF_01174"/>
    </source>
</evidence>
<organism>
    <name type="scientific">Escherichia coli O6:H1 (strain CFT073 / ATCC 700928 / UPEC)</name>
    <dbReference type="NCBI Taxonomy" id="199310"/>
    <lineage>
        <taxon>Bacteria</taxon>
        <taxon>Pseudomonadati</taxon>
        <taxon>Pseudomonadota</taxon>
        <taxon>Gammaproteobacteria</taxon>
        <taxon>Enterobacterales</taxon>
        <taxon>Enterobacteriaceae</taxon>
        <taxon>Escherichia</taxon>
    </lineage>
</organism>
<comment type="function">
    <text evidence="1">Catalyzes the NAD-dependent reduction of succinylglutamate semialdehyde into succinylglutamate.</text>
</comment>
<comment type="catalytic activity">
    <reaction evidence="1">
        <text>N-succinyl-L-glutamate 5-semialdehyde + NAD(+) + H2O = N-succinyl-L-glutamate + NADH + 2 H(+)</text>
        <dbReference type="Rhea" id="RHEA:10812"/>
        <dbReference type="ChEBI" id="CHEBI:15377"/>
        <dbReference type="ChEBI" id="CHEBI:15378"/>
        <dbReference type="ChEBI" id="CHEBI:57540"/>
        <dbReference type="ChEBI" id="CHEBI:57945"/>
        <dbReference type="ChEBI" id="CHEBI:58520"/>
        <dbReference type="ChEBI" id="CHEBI:58763"/>
        <dbReference type="EC" id="1.2.1.71"/>
    </reaction>
</comment>
<comment type="pathway">
    <text evidence="1">Amino-acid degradation; L-arginine degradation via AST pathway; L-glutamate and succinate from L-arginine: step 4/5.</text>
</comment>
<comment type="similarity">
    <text evidence="1">Belongs to the aldehyde dehydrogenase family. AstD subfamily.</text>
</comment>
<sequence length="492" mass="52987">MTLWINGDWVTGQGALRVKRNPVSGEVLWQGNDADAAQVGQACRAARAAFPRWARLSFGDRQVRVERFAGLLESNKAELTAIIARETGKPRWEAATEVTAMINKIAISIKAYHVRTGEQRSEMPDGAASLRHRPHGVLAVFGPYNFPGHLPNGHIVPALLAGNTIIFKPSELTPWSGEAVMRLWQQAGLPPGVLNLVQGGRATGQALSALEDLDGLLFTGSANTGYQLHRQLSGQPEKILALEMGGNNPLIIDEVADIDAAVHLTIQSAFVTAGQRCTCARRLFLKSGTQGDAFLARMVAVSQRLTPGTWDDEPQPFIGGLISEQAAQQVVTAWQELEAMGGRTLLAPRLLQAGTSLLTPGIIEMTGVTGVPDEEVFGPLLRVWRYDNFDEAIRMANNTRFGLSCGLVSPEREKFDQLLLGARAGIVNWNKPLTGAASTAPFGGIGASGNHRPSAWYAADYCAWPMASLESDSLTLPATLNPGLDFSDEVVR</sequence>
<dbReference type="EC" id="1.2.1.71" evidence="1"/>
<dbReference type="EMBL" id="AE014075">
    <property type="protein sequence ID" value="AAN80605.1"/>
    <property type="molecule type" value="Genomic_DNA"/>
</dbReference>
<dbReference type="RefSeq" id="WP_000177325.1">
    <property type="nucleotide sequence ID" value="NZ_CP051263.1"/>
</dbReference>
<dbReference type="SMR" id="Q8FH01"/>
<dbReference type="STRING" id="199310.c2146"/>
<dbReference type="KEGG" id="ecc:c2146"/>
<dbReference type="eggNOG" id="COG1012">
    <property type="taxonomic scope" value="Bacteria"/>
</dbReference>
<dbReference type="HOGENOM" id="CLU_005391_1_0_6"/>
<dbReference type="BioCyc" id="ECOL199310:C2146-MONOMER"/>
<dbReference type="UniPathway" id="UPA00185">
    <property type="reaction ID" value="UER00282"/>
</dbReference>
<dbReference type="Proteomes" id="UP000001410">
    <property type="component" value="Chromosome"/>
</dbReference>
<dbReference type="GO" id="GO:0004030">
    <property type="term" value="F:aldehyde dehydrogenase [NAD(P)+] activity"/>
    <property type="evidence" value="ECO:0007669"/>
    <property type="project" value="UniProtKB-ARBA"/>
</dbReference>
<dbReference type="GO" id="GO:0043824">
    <property type="term" value="F:succinylglutamate-semialdehyde dehydrogenase activity"/>
    <property type="evidence" value="ECO:0007669"/>
    <property type="project" value="UniProtKB-EC"/>
</dbReference>
<dbReference type="GO" id="GO:0019544">
    <property type="term" value="P:arginine catabolic process to glutamate"/>
    <property type="evidence" value="ECO:0007669"/>
    <property type="project" value="UniProtKB-UniRule"/>
</dbReference>
<dbReference type="GO" id="GO:0019545">
    <property type="term" value="P:arginine catabolic process to succinate"/>
    <property type="evidence" value="ECO:0007669"/>
    <property type="project" value="UniProtKB-UniRule"/>
</dbReference>
<dbReference type="CDD" id="cd07095">
    <property type="entry name" value="ALDH_SGSD_AstD"/>
    <property type="match status" value="1"/>
</dbReference>
<dbReference type="FunFam" id="3.40.309.10:FF:000013">
    <property type="entry name" value="N-succinylglutamate 5-semialdehyde dehydrogenase"/>
    <property type="match status" value="1"/>
</dbReference>
<dbReference type="FunFam" id="3.40.605.10:FF:000010">
    <property type="entry name" value="N-succinylglutamate 5-semialdehyde dehydrogenase"/>
    <property type="match status" value="1"/>
</dbReference>
<dbReference type="Gene3D" id="3.40.605.10">
    <property type="entry name" value="Aldehyde Dehydrogenase, Chain A, domain 1"/>
    <property type="match status" value="1"/>
</dbReference>
<dbReference type="Gene3D" id="3.40.309.10">
    <property type="entry name" value="Aldehyde Dehydrogenase, Chain A, domain 2"/>
    <property type="match status" value="1"/>
</dbReference>
<dbReference type="HAMAP" id="MF_01174">
    <property type="entry name" value="Aldedh_AstD"/>
    <property type="match status" value="1"/>
</dbReference>
<dbReference type="InterPro" id="IPR016161">
    <property type="entry name" value="Ald_DH/histidinol_DH"/>
</dbReference>
<dbReference type="InterPro" id="IPR016163">
    <property type="entry name" value="Ald_DH_C"/>
</dbReference>
<dbReference type="InterPro" id="IPR016160">
    <property type="entry name" value="Ald_DH_CS_CYS"/>
</dbReference>
<dbReference type="InterPro" id="IPR029510">
    <property type="entry name" value="Ald_DH_CS_GLU"/>
</dbReference>
<dbReference type="InterPro" id="IPR016162">
    <property type="entry name" value="Ald_DH_N"/>
</dbReference>
<dbReference type="InterPro" id="IPR015590">
    <property type="entry name" value="Aldehyde_DH_dom"/>
</dbReference>
<dbReference type="InterPro" id="IPR017649">
    <property type="entry name" value="SuccinylGlu_semiald_DH_AstD"/>
</dbReference>
<dbReference type="NCBIfam" id="TIGR03240">
    <property type="entry name" value="arg_catab_astD"/>
    <property type="match status" value="1"/>
</dbReference>
<dbReference type="NCBIfam" id="NF006992">
    <property type="entry name" value="PRK09457.1"/>
    <property type="match status" value="1"/>
</dbReference>
<dbReference type="PANTHER" id="PTHR11699">
    <property type="entry name" value="ALDEHYDE DEHYDROGENASE-RELATED"/>
    <property type="match status" value="1"/>
</dbReference>
<dbReference type="Pfam" id="PF00171">
    <property type="entry name" value="Aldedh"/>
    <property type="match status" value="1"/>
</dbReference>
<dbReference type="SUPFAM" id="SSF53720">
    <property type="entry name" value="ALDH-like"/>
    <property type="match status" value="1"/>
</dbReference>
<dbReference type="PROSITE" id="PS00070">
    <property type="entry name" value="ALDEHYDE_DEHYDR_CYS"/>
    <property type="match status" value="1"/>
</dbReference>
<dbReference type="PROSITE" id="PS00687">
    <property type="entry name" value="ALDEHYDE_DEHYDR_GLU"/>
    <property type="match status" value="1"/>
</dbReference>
<name>ASTD_ECOL6</name>
<feature type="chain" id="PRO_0000262401" description="N-succinylglutamate 5-semialdehyde dehydrogenase">
    <location>
        <begin position="1"/>
        <end position="492"/>
    </location>
</feature>
<feature type="active site" evidence="1">
    <location>
        <position position="243"/>
    </location>
</feature>
<feature type="active site" evidence="1">
    <location>
        <position position="277"/>
    </location>
</feature>
<feature type="binding site" evidence="1">
    <location>
        <begin position="220"/>
        <end position="225"/>
    </location>
    <ligand>
        <name>NAD(+)</name>
        <dbReference type="ChEBI" id="CHEBI:57540"/>
    </ligand>
</feature>